<reference key="1">
    <citation type="journal article" date="1990" name="Virology">
        <title>The complete DNA sequence of vaccinia virus.</title>
        <authorList>
            <person name="Goebel S.J."/>
            <person name="Johnson G.P."/>
            <person name="Perkus M.E."/>
            <person name="Davis S.W."/>
            <person name="Winslow J.P."/>
            <person name="Paoletti E."/>
        </authorList>
    </citation>
    <scope>NUCLEOTIDE SEQUENCE [LARGE SCALE GENOMIC DNA]</scope>
</reference>
<reference key="2">
    <citation type="journal article" date="1990" name="Virology">
        <title>Appendix to 'The complete DNA sequence of vaccinia virus'.</title>
        <authorList>
            <person name="Goebel S.J."/>
            <person name="Johnson G.P."/>
            <person name="Perkus M.E."/>
            <person name="Davis S.W."/>
            <person name="Winslow J.P."/>
            <person name="Paoletti E."/>
        </authorList>
    </citation>
    <scope>NUCLEOTIDE SEQUENCE [LARGE SCALE GENOMIC DNA]</scope>
</reference>
<gene>
    <name type="primary">OPG051</name>
    <name type="ORF">F7L</name>
</gene>
<evidence type="ECO:0000250" key="1">
    <source>
        <dbReference type="UniProtKB" id="P24359"/>
    </source>
</evidence>
<evidence type="ECO:0000256" key="2">
    <source>
        <dbReference type="SAM" id="MobiDB-lite"/>
    </source>
</evidence>
<evidence type="ECO:0000305" key="3"/>
<organism>
    <name type="scientific">Vaccinia virus (strain Copenhagen)</name>
    <name type="common">VACV</name>
    <dbReference type="NCBI Taxonomy" id="10249"/>
    <lineage>
        <taxon>Viruses</taxon>
        <taxon>Varidnaviria</taxon>
        <taxon>Bamfordvirae</taxon>
        <taxon>Nucleocytoviricota</taxon>
        <taxon>Pokkesviricetes</taxon>
        <taxon>Chitovirales</taxon>
        <taxon>Poxviridae</taxon>
        <taxon>Chordopoxvirinae</taxon>
        <taxon>Orthopoxvirus</taxon>
        <taxon>Vaccinia virus</taxon>
    </lineage>
</organism>
<name>PG051_VACCC</name>
<proteinExistence type="inferred from homology"/>
<keyword id="KW-0244">Early protein</keyword>
<keyword id="KW-1185">Reference proteome</keyword>
<keyword id="KW-0677">Repeat</keyword>
<accession>P21016</accession>
<comment type="induction">
    <text evidence="1">Expressed in the early phase of the viral replicative cycle.</text>
</comment>
<comment type="similarity">
    <text evidence="3">Belongs to the orthopoxvirus OPG051 family.</text>
</comment>
<organismHost>
    <name type="scientific">Homo sapiens</name>
    <name type="common">Human</name>
    <dbReference type="NCBI Taxonomy" id="9606"/>
</organismHost>
<dbReference type="EMBL" id="M35027">
    <property type="protein sequence ID" value="AAA48023.1"/>
    <property type="molecule type" value="Genomic_DNA"/>
</dbReference>
<dbReference type="PIR" id="C42507">
    <property type="entry name" value="C42507"/>
</dbReference>
<dbReference type="Proteomes" id="UP000008269">
    <property type="component" value="Segment"/>
</dbReference>
<dbReference type="InterPro" id="IPR008725">
    <property type="entry name" value="Orthopox_F7"/>
</dbReference>
<dbReference type="Pfam" id="PF05813">
    <property type="entry name" value="Orthopox_F7"/>
    <property type="match status" value="1"/>
</dbReference>
<feature type="chain" id="PRO_0000099483" description="Protein OPG051">
    <location>
        <begin position="1"/>
        <end position="92"/>
    </location>
</feature>
<feature type="repeat" description="1">
    <location>
        <begin position="16"/>
        <end position="17"/>
    </location>
</feature>
<feature type="repeat" description="2">
    <location>
        <begin position="18"/>
        <end position="19"/>
    </location>
</feature>
<feature type="repeat" description="3">
    <location>
        <begin position="20"/>
        <end position="21"/>
    </location>
</feature>
<feature type="repeat" description="4">
    <location>
        <begin position="22"/>
        <end position="23"/>
    </location>
</feature>
<feature type="repeat" description="5">
    <location>
        <begin position="24"/>
        <end position="25"/>
    </location>
</feature>
<feature type="repeat" description="6">
    <location>
        <begin position="26"/>
        <end position="27"/>
    </location>
</feature>
<feature type="repeat" description="7">
    <location>
        <begin position="28"/>
        <end position="29"/>
    </location>
</feature>
<feature type="repeat" description="8">
    <location>
        <begin position="30"/>
        <end position="31"/>
    </location>
</feature>
<feature type="region of interest" description="8 X 2 AA tandem repeats of K-N">
    <location>
        <begin position="16"/>
        <end position="31"/>
    </location>
</feature>
<feature type="region of interest" description="Disordered" evidence="2">
    <location>
        <begin position="19"/>
        <end position="38"/>
    </location>
</feature>
<feature type="compositionally biased region" description="Basic residues" evidence="2">
    <location>
        <begin position="19"/>
        <end position="31"/>
    </location>
</feature>
<protein>
    <recommendedName>
        <fullName>Protein OPG051</fullName>
    </recommendedName>
    <alternativeName>
        <fullName>Protein F7</fullName>
    </alternativeName>
</protein>
<sequence length="92" mass="10938">MTLVMGFCCGRFCDAKNKNKNKNKNKNKNKNKKEDVEEGREGCYNYKNLNDLDESEARVEFGPLYMINEEKSDINTLDIKRRYRHTIESVYF</sequence>